<dbReference type="EMBL" id="CP000927">
    <property type="protein sequence ID" value="ABZ73362.1"/>
    <property type="molecule type" value="Genomic_DNA"/>
</dbReference>
<dbReference type="SMR" id="B0SYJ5"/>
<dbReference type="STRING" id="366602.Caul_4240"/>
<dbReference type="KEGG" id="cak:Caul_4240"/>
<dbReference type="eggNOG" id="COG2156">
    <property type="taxonomic scope" value="Bacteria"/>
</dbReference>
<dbReference type="HOGENOM" id="CLU_077094_2_0_5"/>
<dbReference type="OrthoDB" id="9788285at2"/>
<dbReference type="GO" id="GO:0005886">
    <property type="term" value="C:plasma membrane"/>
    <property type="evidence" value="ECO:0007669"/>
    <property type="project" value="UniProtKB-SubCell"/>
</dbReference>
<dbReference type="GO" id="GO:0005524">
    <property type="term" value="F:ATP binding"/>
    <property type="evidence" value="ECO:0007669"/>
    <property type="project" value="UniProtKB-UniRule"/>
</dbReference>
<dbReference type="GO" id="GO:0008556">
    <property type="term" value="F:P-type potassium transmembrane transporter activity"/>
    <property type="evidence" value="ECO:0007669"/>
    <property type="project" value="InterPro"/>
</dbReference>
<dbReference type="HAMAP" id="MF_00276">
    <property type="entry name" value="KdpC"/>
    <property type="match status" value="1"/>
</dbReference>
<dbReference type="InterPro" id="IPR003820">
    <property type="entry name" value="KdpC"/>
</dbReference>
<dbReference type="NCBIfam" id="TIGR00681">
    <property type="entry name" value="kdpC"/>
    <property type="match status" value="1"/>
</dbReference>
<dbReference type="NCBIfam" id="NF001454">
    <property type="entry name" value="PRK00315.1"/>
    <property type="match status" value="1"/>
</dbReference>
<dbReference type="PANTHER" id="PTHR30042">
    <property type="entry name" value="POTASSIUM-TRANSPORTING ATPASE C CHAIN"/>
    <property type="match status" value="1"/>
</dbReference>
<dbReference type="PANTHER" id="PTHR30042:SF2">
    <property type="entry name" value="POTASSIUM-TRANSPORTING ATPASE KDPC SUBUNIT"/>
    <property type="match status" value="1"/>
</dbReference>
<dbReference type="Pfam" id="PF02669">
    <property type="entry name" value="KdpC"/>
    <property type="match status" value="1"/>
</dbReference>
<dbReference type="PIRSF" id="PIRSF001296">
    <property type="entry name" value="K_ATPase_KdpC"/>
    <property type="match status" value="1"/>
</dbReference>
<reference key="1">
    <citation type="submission" date="2008-01" db="EMBL/GenBank/DDBJ databases">
        <title>Complete sequence of chromosome of Caulobacter sp. K31.</title>
        <authorList>
            <consortium name="US DOE Joint Genome Institute"/>
            <person name="Copeland A."/>
            <person name="Lucas S."/>
            <person name="Lapidus A."/>
            <person name="Barry K."/>
            <person name="Glavina del Rio T."/>
            <person name="Dalin E."/>
            <person name="Tice H."/>
            <person name="Pitluck S."/>
            <person name="Bruce D."/>
            <person name="Goodwin L."/>
            <person name="Thompson L.S."/>
            <person name="Brettin T."/>
            <person name="Detter J.C."/>
            <person name="Han C."/>
            <person name="Schmutz J."/>
            <person name="Larimer F."/>
            <person name="Land M."/>
            <person name="Hauser L."/>
            <person name="Kyrpides N."/>
            <person name="Kim E."/>
            <person name="Stephens C."/>
            <person name="Richardson P."/>
        </authorList>
    </citation>
    <scope>NUCLEOTIDE SEQUENCE [LARGE SCALE GENOMIC DNA]</scope>
    <source>
        <strain>K31</strain>
    </source>
</reference>
<keyword id="KW-0067">ATP-binding</keyword>
<keyword id="KW-0997">Cell inner membrane</keyword>
<keyword id="KW-1003">Cell membrane</keyword>
<keyword id="KW-0406">Ion transport</keyword>
<keyword id="KW-0472">Membrane</keyword>
<keyword id="KW-0547">Nucleotide-binding</keyword>
<keyword id="KW-0630">Potassium</keyword>
<keyword id="KW-0633">Potassium transport</keyword>
<keyword id="KW-0812">Transmembrane</keyword>
<keyword id="KW-1133">Transmembrane helix</keyword>
<keyword id="KW-0813">Transport</keyword>
<organism>
    <name type="scientific">Caulobacter sp. (strain K31)</name>
    <dbReference type="NCBI Taxonomy" id="366602"/>
    <lineage>
        <taxon>Bacteria</taxon>
        <taxon>Pseudomonadati</taxon>
        <taxon>Pseudomonadota</taxon>
        <taxon>Alphaproteobacteria</taxon>
        <taxon>Caulobacterales</taxon>
        <taxon>Caulobacteraceae</taxon>
        <taxon>Caulobacter</taxon>
    </lineage>
</organism>
<gene>
    <name evidence="1" type="primary">kdpC</name>
    <name type="ordered locus">Caul_4240</name>
</gene>
<sequence>MLSHLRPAIVSAGLFTVLLGLAYPLAVTGVAQAAFPAQANGSLVKDAKGTVVGSTLIAQAFAKPEYLHPRPSAAGAGYDASASSGSNMGPLNDTLIKREKTDADALRAENPGVVIPADAVTTSGSGLDPEISPANARFQAPRVAKARGLRLAQVQAVIDGQAQGPLLGFIGQPRVNVLTVNRTLDARFPAHGQKGG</sequence>
<comment type="function">
    <text evidence="1">Part of the high-affinity ATP-driven potassium transport (or Kdp) system, which catalyzes the hydrolysis of ATP coupled with the electrogenic transport of potassium into the cytoplasm. This subunit acts as a catalytic chaperone that increases the ATP-binding affinity of the ATP-hydrolyzing subunit KdpB by the formation of a transient KdpB/KdpC/ATP ternary complex.</text>
</comment>
<comment type="subunit">
    <text evidence="1">The system is composed of three essential subunits: KdpA, KdpB and KdpC.</text>
</comment>
<comment type="subcellular location">
    <subcellularLocation>
        <location evidence="1">Cell inner membrane</location>
        <topology evidence="1">Single-pass membrane protein</topology>
    </subcellularLocation>
</comment>
<comment type="similarity">
    <text evidence="1">Belongs to the KdpC family.</text>
</comment>
<proteinExistence type="inferred from homology"/>
<evidence type="ECO:0000255" key="1">
    <source>
        <dbReference type="HAMAP-Rule" id="MF_00276"/>
    </source>
</evidence>
<protein>
    <recommendedName>
        <fullName evidence="1">Potassium-transporting ATPase KdpC subunit</fullName>
    </recommendedName>
    <alternativeName>
        <fullName evidence="1">ATP phosphohydrolase [potassium-transporting] C chain</fullName>
    </alternativeName>
    <alternativeName>
        <fullName evidence="1">Potassium-binding and translocating subunit C</fullName>
    </alternativeName>
    <alternativeName>
        <fullName evidence="1">Potassium-translocating ATPase C chain</fullName>
    </alternativeName>
</protein>
<accession>B0SYJ5</accession>
<feature type="chain" id="PRO_1000078792" description="Potassium-transporting ATPase KdpC subunit">
    <location>
        <begin position="1"/>
        <end position="196"/>
    </location>
</feature>
<feature type="transmembrane region" description="Helical" evidence="1">
    <location>
        <begin position="7"/>
        <end position="27"/>
    </location>
</feature>
<name>KDPC_CAUSK</name>